<feature type="chain" id="PRO_1000052015" description="Large ribosomal subunit protein uL3">
    <location>
        <begin position="1"/>
        <end position="239"/>
    </location>
</feature>
<feature type="region of interest" description="Disordered" evidence="2">
    <location>
        <begin position="140"/>
        <end position="166"/>
    </location>
</feature>
<feature type="region of interest" description="Disordered" evidence="2">
    <location>
        <begin position="211"/>
        <end position="239"/>
    </location>
</feature>
<feature type="modified residue" description="N5-methylglutamine" evidence="1">
    <location>
        <position position="151"/>
    </location>
</feature>
<proteinExistence type="inferred from homology"/>
<comment type="function">
    <text evidence="1">One of the primary rRNA binding proteins, it binds directly near the 3'-end of the 23S rRNA, where it nucleates assembly of the 50S subunit.</text>
</comment>
<comment type="subunit">
    <text evidence="1">Part of the 50S ribosomal subunit. Forms a cluster with proteins L14 and L19.</text>
</comment>
<comment type="PTM">
    <text evidence="1">Methylated by PrmB.</text>
</comment>
<comment type="similarity">
    <text evidence="1">Belongs to the universal ribosomal protein uL3 family.</text>
</comment>
<reference key="1">
    <citation type="journal article" date="2007" name="Science">
        <title>Legumes symbioses: absence of nod genes in photosynthetic bradyrhizobia.</title>
        <authorList>
            <person name="Giraud E."/>
            <person name="Moulin L."/>
            <person name="Vallenet D."/>
            <person name="Barbe V."/>
            <person name="Cytryn E."/>
            <person name="Avarre J.-C."/>
            <person name="Jaubert M."/>
            <person name="Simon D."/>
            <person name="Cartieaux F."/>
            <person name="Prin Y."/>
            <person name="Bena G."/>
            <person name="Hannibal L."/>
            <person name="Fardoux J."/>
            <person name="Kojadinovic M."/>
            <person name="Vuillet L."/>
            <person name="Lajus A."/>
            <person name="Cruveiller S."/>
            <person name="Rouy Z."/>
            <person name="Mangenot S."/>
            <person name="Segurens B."/>
            <person name="Dossat C."/>
            <person name="Franck W.L."/>
            <person name="Chang W.-S."/>
            <person name="Saunders E."/>
            <person name="Bruce D."/>
            <person name="Richardson P."/>
            <person name="Normand P."/>
            <person name="Dreyfus B."/>
            <person name="Pignol D."/>
            <person name="Stacey G."/>
            <person name="Emerich D."/>
            <person name="Vermeglio A."/>
            <person name="Medigue C."/>
            <person name="Sadowsky M."/>
        </authorList>
    </citation>
    <scope>NUCLEOTIDE SEQUENCE [LARGE SCALE GENOMIC DNA]</scope>
    <source>
        <strain>BTAi1 / ATCC BAA-1182</strain>
    </source>
</reference>
<sequence length="239" mass="25475">MRSGVIAQKVGMTRVFTETGEHIPVTVLKLGNCQVVGHRTTEKNGYVALQLGSGSRKTVYMPKAERGQFAVAKVEPKRKVAEFRVSEDSLIPVGAEILADHFVVGQFVDVTGTTVGKGFAGGMKRWNFGGLRATHGVSISHRSIGSTGGRQDPGKTWKNKKMPGHMGVDRVTTLNLRVVQTDVERGLILVEGAVPGSKGGWISVRDAVKKPLPKEAPKPGKFKVAGEQAAEAPAVQEGA</sequence>
<name>RL3_BRASB</name>
<evidence type="ECO:0000255" key="1">
    <source>
        <dbReference type="HAMAP-Rule" id="MF_01325"/>
    </source>
</evidence>
<evidence type="ECO:0000256" key="2">
    <source>
        <dbReference type="SAM" id="MobiDB-lite"/>
    </source>
</evidence>
<evidence type="ECO:0000305" key="3"/>
<gene>
    <name evidence="1" type="primary">rplC</name>
    <name type="ordered locus">BBta_5070</name>
</gene>
<protein>
    <recommendedName>
        <fullName evidence="1">Large ribosomal subunit protein uL3</fullName>
    </recommendedName>
    <alternativeName>
        <fullName evidence="3">50S ribosomal protein L3</fullName>
    </alternativeName>
</protein>
<organism>
    <name type="scientific">Bradyrhizobium sp. (strain BTAi1 / ATCC BAA-1182)</name>
    <dbReference type="NCBI Taxonomy" id="288000"/>
    <lineage>
        <taxon>Bacteria</taxon>
        <taxon>Pseudomonadati</taxon>
        <taxon>Pseudomonadota</taxon>
        <taxon>Alphaproteobacteria</taxon>
        <taxon>Hyphomicrobiales</taxon>
        <taxon>Nitrobacteraceae</taxon>
        <taxon>Bradyrhizobium</taxon>
    </lineage>
</organism>
<dbReference type="EMBL" id="CP000494">
    <property type="protein sequence ID" value="ABQ37071.1"/>
    <property type="molecule type" value="Genomic_DNA"/>
</dbReference>
<dbReference type="RefSeq" id="WP_012045045.1">
    <property type="nucleotide sequence ID" value="NC_009485.1"/>
</dbReference>
<dbReference type="SMR" id="A5ELM7"/>
<dbReference type="STRING" id="288000.BBta_5070"/>
<dbReference type="KEGG" id="bbt:BBta_5070"/>
<dbReference type="eggNOG" id="COG0087">
    <property type="taxonomic scope" value="Bacteria"/>
</dbReference>
<dbReference type="HOGENOM" id="CLU_044142_2_0_5"/>
<dbReference type="OrthoDB" id="9806135at2"/>
<dbReference type="Proteomes" id="UP000000246">
    <property type="component" value="Chromosome"/>
</dbReference>
<dbReference type="GO" id="GO:0022625">
    <property type="term" value="C:cytosolic large ribosomal subunit"/>
    <property type="evidence" value="ECO:0007669"/>
    <property type="project" value="TreeGrafter"/>
</dbReference>
<dbReference type="GO" id="GO:0019843">
    <property type="term" value="F:rRNA binding"/>
    <property type="evidence" value="ECO:0007669"/>
    <property type="project" value="UniProtKB-UniRule"/>
</dbReference>
<dbReference type="GO" id="GO:0003735">
    <property type="term" value="F:structural constituent of ribosome"/>
    <property type="evidence" value="ECO:0007669"/>
    <property type="project" value="InterPro"/>
</dbReference>
<dbReference type="GO" id="GO:0006412">
    <property type="term" value="P:translation"/>
    <property type="evidence" value="ECO:0007669"/>
    <property type="project" value="UniProtKB-UniRule"/>
</dbReference>
<dbReference type="FunFam" id="2.40.30.10:FF:000004">
    <property type="entry name" value="50S ribosomal protein L3"/>
    <property type="match status" value="1"/>
</dbReference>
<dbReference type="FunFam" id="3.30.160.810:FF:000001">
    <property type="entry name" value="50S ribosomal protein L3"/>
    <property type="match status" value="1"/>
</dbReference>
<dbReference type="Gene3D" id="3.30.160.810">
    <property type="match status" value="1"/>
</dbReference>
<dbReference type="Gene3D" id="2.40.30.10">
    <property type="entry name" value="Translation factors"/>
    <property type="match status" value="1"/>
</dbReference>
<dbReference type="HAMAP" id="MF_01325_B">
    <property type="entry name" value="Ribosomal_uL3_B"/>
    <property type="match status" value="1"/>
</dbReference>
<dbReference type="InterPro" id="IPR000597">
    <property type="entry name" value="Ribosomal_uL3"/>
</dbReference>
<dbReference type="InterPro" id="IPR019927">
    <property type="entry name" value="Ribosomal_uL3_bac/org-type"/>
</dbReference>
<dbReference type="InterPro" id="IPR019926">
    <property type="entry name" value="Ribosomal_uL3_CS"/>
</dbReference>
<dbReference type="InterPro" id="IPR009000">
    <property type="entry name" value="Transl_B-barrel_sf"/>
</dbReference>
<dbReference type="NCBIfam" id="TIGR03625">
    <property type="entry name" value="L3_bact"/>
    <property type="match status" value="1"/>
</dbReference>
<dbReference type="PANTHER" id="PTHR11229">
    <property type="entry name" value="50S RIBOSOMAL PROTEIN L3"/>
    <property type="match status" value="1"/>
</dbReference>
<dbReference type="PANTHER" id="PTHR11229:SF16">
    <property type="entry name" value="LARGE RIBOSOMAL SUBUNIT PROTEIN UL3C"/>
    <property type="match status" value="1"/>
</dbReference>
<dbReference type="Pfam" id="PF00297">
    <property type="entry name" value="Ribosomal_L3"/>
    <property type="match status" value="1"/>
</dbReference>
<dbReference type="SUPFAM" id="SSF50447">
    <property type="entry name" value="Translation proteins"/>
    <property type="match status" value="1"/>
</dbReference>
<dbReference type="PROSITE" id="PS00474">
    <property type="entry name" value="RIBOSOMAL_L3"/>
    <property type="match status" value="1"/>
</dbReference>
<accession>A5ELM7</accession>
<keyword id="KW-0488">Methylation</keyword>
<keyword id="KW-1185">Reference proteome</keyword>
<keyword id="KW-0687">Ribonucleoprotein</keyword>
<keyword id="KW-0689">Ribosomal protein</keyword>
<keyword id="KW-0694">RNA-binding</keyword>
<keyword id="KW-0699">rRNA-binding</keyword>